<gene>
    <name evidence="2" type="primary">trmB</name>
    <name type="ordered locus">STM3109</name>
</gene>
<accession>Q8ZM40</accession>
<evidence type="ECO:0000250" key="1"/>
<evidence type="ECO:0000255" key="2">
    <source>
        <dbReference type="HAMAP-Rule" id="MF_01057"/>
    </source>
</evidence>
<comment type="function">
    <text evidence="2">Catalyzes the formation of N(7)-methylguanine at position 46 (m7G46) in tRNA.</text>
</comment>
<comment type="catalytic activity">
    <reaction evidence="2">
        <text>guanosine(46) in tRNA + S-adenosyl-L-methionine = N(7)-methylguanosine(46) in tRNA + S-adenosyl-L-homocysteine</text>
        <dbReference type="Rhea" id="RHEA:42708"/>
        <dbReference type="Rhea" id="RHEA-COMP:10188"/>
        <dbReference type="Rhea" id="RHEA-COMP:10189"/>
        <dbReference type="ChEBI" id="CHEBI:57856"/>
        <dbReference type="ChEBI" id="CHEBI:59789"/>
        <dbReference type="ChEBI" id="CHEBI:74269"/>
        <dbReference type="ChEBI" id="CHEBI:74480"/>
        <dbReference type="EC" id="2.1.1.33"/>
    </reaction>
</comment>
<comment type="pathway">
    <text evidence="2">tRNA modification; N(7)-methylguanine-tRNA biosynthesis.</text>
</comment>
<comment type="subunit">
    <text evidence="2">Monomer.</text>
</comment>
<comment type="similarity">
    <text evidence="2">Belongs to the class I-like SAM-binding methyltransferase superfamily. TrmB family.</text>
</comment>
<organism>
    <name type="scientific">Salmonella typhimurium (strain LT2 / SGSC1412 / ATCC 700720)</name>
    <dbReference type="NCBI Taxonomy" id="99287"/>
    <lineage>
        <taxon>Bacteria</taxon>
        <taxon>Pseudomonadati</taxon>
        <taxon>Pseudomonadota</taxon>
        <taxon>Gammaproteobacteria</taxon>
        <taxon>Enterobacterales</taxon>
        <taxon>Enterobacteriaceae</taxon>
        <taxon>Salmonella</taxon>
    </lineage>
</organism>
<reference key="1">
    <citation type="journal article" date="2001" name="Nature">
        <title>Complete genome sequence of Salmonella enterica serovar Typhimurium LT2.</title>
        <authorList>
            <person name="McClelland M."/>
            <person name="Sanderson K.E."/>
            <person name="Spieth J."/>
            <person name="Clifton S.W."/>
            <person name="Latreille P."/>
            <person name="Courtney L."/>
            <person name="Porwollik S."/>
            <person name="Ali J."/>
            <person name="Dante M."/>
            <person name="Du F."/>
            <person name="Hou S."/>
            <person name="Layman D."/>
            <person name="Leonard S."/>
            <person name="Nguyen C."/>
            <person name="Scott K."/>
            <person name="Holmes A."/>
            <person name="Grewal N."/>
            <person name="Mulvaney E."/>
            <person name="Ryan E."/>
            <person name="Sun H."/>
            <person name="Florea L."/>
            <person name="Miller W."/>
            <person name="Stoneking T."/>
            <person name="Nhan M."/>
            <person name="Waterston R."/>
            <person name="Wilson R.K."/>
        </authorList>
    </citation>
    <scope>NUCLEOTIDE SEQUENCE [LARGE SCALE GENOMIC DNA]</scope>
    <source>
        <strain>LT2 / SGSC1412 / ATCC 700720</strain>
    </source>
</reference>
<dbReference type="EC" id="2.1.1.33" evidence="2"/>
<dbReference type="EMBL" id="AE006468">
    <property type="protein sequence ID" value="AAL21984.1"/>
    <property type="molecule type" value="Genomic_DNA"/>
</dbReference>
<dbReference type="RefSeq" id="WP_000786895.1">
    <property type="nucleotide sequence ID" value="NC_003197.2"/>
</dbReference>
<dbReference type="SMR" id="Q8ZM40"/>
<dbReference type="STRING" id="99287.STM3109"/>
<dbReference type="PaxDb" id="99287-STM3109"/>
<dbReference type="KEGG" id="stm:STM3109"/>
<dbReference type="PATRIC" id="fig|99287.12.peg.3295"/>
<dbReference type="HOGENOM" id="CLU_050910_0_1_6"/>
<dbReference type="OMA" id="PDPWHKS"/>
<dbReference type="PhylomeDB" id="Q8ZM40"/>
<dbReference type="BioCyc" id="SENT99287:STM3109-MONOMER"/>
<dbReference type="UniPathway" id="UPA00989"/>
<dbReference type="Proteomes" id="UP000001014">
    <property type="component" value="Chromosome"/>
</dbReference>
<dbReference type="GO" id="GO:0043527">
    <property type="term" value="C:tRNA methyltransferase complex"/>
    <property type="evidence" value="ECO:0000318"/>
    <property type="project" value="GO_Central"/>
</dbReference>
<dbReference type="GO" id="GO:0008176">
    <property type="term" value="F:tRNA (guanine(46)-N7)-methyltransferase activity"/>
    <property type="evidence" value="ECO:0000318"/>
    <property type="project" value="GO_Central"/>
</dbReference>
<dbReference type="GO" id="GO:0036265">
    <property type="term" value="P:RNA (guanine-N7)-methylation"/>
    <property type="evidence" value="ECO:0000318"/>
    <property type="project" value="GO_Central"/>
</dbReference>
<dbReference type="GO" id="GO:0030488">
    <property type="term" value="P:tRNA methylation"/>
    <property type="evidence" value="ECO:0000318"/>
    <property type="project" value="GO_Central"/>
</dbReference>
<dbReference type="FunFam" id="3.40.50.150:FF:000024">
    <property type="entry name" value="tRNA (guanine-N(7)-)-methyltransferase"/>
    <property type="match status" value="1"/>
</dbReference>
<dbReference type="Gene3D" id="3.40.50.150">
    <property type="entry name" value="Vaccinia Virus protein VP39"/>
    <property type="match status" value="1"/>
</dbReference>
<dbReference type="HAMAP" id="MF_01057">
    <property type="entry name" value="tRNA_methyltr_TrmB"/>
    <property type="match status" value="1"/>
</dbReference>
<dbReference type="InterPro" id="IPR029063">
    <property type="entry name" value="SAM-dependent_MTases_sf"/>
</dbReference>
<dbReference type="InterPro" id="IPR003358">
    <property type="entry name" value="tRNA_(Gua-N-7)_MeTrfase_Trmb"/>
</dbReference>
<dbReference type="InterPro" id="IPR055361">
    <property type="entry name" value="tRNA_methyltr_TrmB_bact"/>
</dbReference>
<dbReference type="NCBIfam" id="TIGR00091">
    <property type="entry name" value="tRNA (guanosine(46)-N7)-methyltransferase TrmB"/>
    <property type="match status" value="1"/>
</dbReference>
<dbReference type="PANTHER" id="PTHR23417">
    <property type="entry name" value="3-DEOXY-D-MANNO-OCTULOSONIC-ACID TRANSFERASE/TRNA GUANINE-N 7 - -METHYLTRANSFERASE"/>
    <property type="match status" value="1"/>
</dbReference>
<dbReference type="PANTHER" id="PTHR23417:SF14">
    <property type="entry name" value="PENTACOTRIPEPTIDE-REPEAT REGION OF PRORP DOMAIN-CONTAINING PROTEIN"/>
    <property type="match status" value="1"/>
</dbReference>
<dbReference type="Pfam" id="PF02390">
    <property type="entry name" value="Methyltransf_4"/>
    <property type="match status" value="1"/>
</dbReference>
<dbReference type="SUPFAM" id="SSF53335">
    <property type="entry name" value="S-adenosyl-L-methionine-dependent methyltransferases"/>
    <property type="match status" value="1"/>
</dbReference>
<dbReference type="PROSITE" id="PS51625">
    <property type="entry name" value="SAM_MT_TRMB"/>
    <property type="match status" value="1"/>
</dbReference>
<feature type="chain" id="PRO_0000171385" description="tRNA (guanine-N(7)-)-methyltransferase">
    <location>
        <begin position="1"/>
        <end position="239"/>
    </location>
</feature>
<feature type="region of interest" description="Interaction with RNA" evidence="2">
    <location>
        <begin position="150"/>
        <end position="155"/>
    </location>
</feature>
<feature type="active site" evidence="1">
    <location>
        <position position="144"/>
    </location>
</feature>
<feature type="binding site" evidence="2">
    <location>
        <position position="69"/>
    </location>
    <ligand>
        <name>S-adenosyl-L-methionine</name>
        <dbReference type="ChEBI" id="CHEBI:59789"/>
    </ligand>
</feature>
<feature type="binding site" evidence="2">
    <location>
        <position position="94"/>
    </location>
    <ligand>
        <name>S-adenosyl-L-methionine</name>
        <dbReference type="ChEBI" id="CHEBI:59789"/>
    </ligand>
</feature>
<feature type="binding site" evidence="2">
    <location>
        <position position="121"/>
    </location>
    <ligand>
        <name>S-adenosyl-L-methionine</name>
        <dbReference type="ChEBI" id="CHEBI:59789"/>
    </ligand>
</feature>
<feature type="binding site" evidence="2">
    <location>
        <position position="144"/>
    </location>
    <ligand>
        <name>S-adenosyl-L-methionine</name>
        <dbReference type="ChEBI" id="CHEBI:59789"/>
    </ligand>
</feature>
<feature type="binding site" evidence="2">
    <location>
        <position position="148"/>
    </location>
    <ligand>
        <name>substrate</name>
    </ligand>
</feature>
<feature type="binding site" evidence="2">
    <location>
        <position position="180"/>
    </location>
    <ligand>
        <name>substrate</name>
    </ligand>
</feature>
<feature type="binding site" evidence="2">
    <location>
        <begin position="217"/>
        <end position="220"/>
    </location>
    <ligand>
        <name>substrate</name>
    </ligand>
</feature>
<protein>
    <recommendedName>
        <fullName evidence="2">tRNA (guanine-N(7)-)-methyltransferase</fullName>
        <ecNumber evidence="2">2.1.1.33</ecNumber>
    </recommendedName>
    <alternativeName>
        <fullName evidence="2">tRNA (guanine(46)-N(7))-methyltransferase</fullName>
    </alternativeName>
    <alternativeName>
        <fullName evidence="2">tRNA(m7G46)-methyltransferase</fullName>
    </alternativeName>
</protein>
<sequence length="239" mass="27127">MKNDVISPEFDENGRPLRRIRSFVRRQGRLTKGQEHALENYWPVMGVEFSEAPVDFATLFGREAPVTLEIGFGMGASLVAMAKARPEQNFLGIEVHSPGVGACLASANEEGVENLRVMCHDAVEVLHKMIPDNSLSMVQLFFPDPWHKARHNKRRIVQVPFAELVLSKLKLGGVFHMATDWEAYAEHMLEVMSSIDGYKNLSESNDYVPRPESRPVTKFEQRGHRLGHGVWDLMFERVK</sequence>
<keyword id="KW-0489">Methyltransferase</keyword>
<keyword id="KW-1185">Reference proteome</keyword>
<keyword id="KW-0949">S-adenosyl-L-methionine</keyword>
<keyword id="KW-0808">Transferase</keyword>
<keyword id="KW-0819">tRNA processing</keyword>
<name>TRMB_SALTY</name>
<proteinExistence type="inferred from homology"/>